<gene>
    <name evidence="1" type="primary">panC</name>
    <name type="ordered locus">Mvan_5364</name>
</gene>
<dbReference type="EC" id="6.3.2.1" evidence="1"/>
<dbReference type="EMBL" id="CP000511">
    <property type="protein sequence ID" value="ABM16135.1"/>
    <property type="molecule type" value="Genomic_DNA"/>
</dbReference>
<dbReference type="RefSeq" id="WP_011782503.1">
    <property type="nucleotide sequence ID" value="NC_008726.1"/>
</dbReference>
<dbReference type="SMR" id="A1TG35"/>
<dbReference type="STRING" id="350058.Mvan_5364"/>
<dbReference type="KEGG" id="mva:Mvan_5364"/>
<dbReference type="eggNOG" id="COG0414">
    <property type="taxonomic scope" value="Bacteria"/>
</dbReference>
<dbReference type="HOGENOM" id="CLU_047148_0_2_11"/>
<dbReference type="UniPathway" id="UPA00028">
    <property type="reaction ID" value="UER00005"/>
</dbReference>
<dbReference type="Proteomes" id="UP000009159">
    <property type="component" value="Chromosome"/>
</dbReference>
<dbReference type="GO" id="GO:0005829">
    <property type="term" value="C:cytosol"/>
    <property type="evidence" value="ECO:0007669"/>
    <property type="project" value="TreeGrafter"/>
</dbReference>
<dbReference type="GO" id="GO:0005524">
    <property type="term" value="F:ATP binding"/>
    <property type="evidence" value="ECO:0007669"/>
    <property type="project" value="UniProtKB-KW"/>
</dbReference>
<dbReference type="GO" id="GO:0004592">
    <property type="term" value="F:pantoate-beta-alanine ligase activity"/>
    <property type="evidence" value="ECO:0007669"/>
    <property type="project" value="UniProtKB-UniRule"/>
</dbReference>
<dbReference type="GO" id="GO:0015940">
    <property type="term" value="P:pantothenate biosynthetic process"/>
    <property type="evidence" value="ECO:0007669"/>
    <property type="project" value="UniProtKB-UniRule"/>
</dbReference>
<dbReference type="CDD" id="cd00560">
    <property type="entry name" value="PanC"/>
    <property type="match status" value="1"/>
</dbReference>
<dbReference type="FunFam" id="3.40.50.620:FF:000114">
    <property type="entry name" value="Pantothenate synthetase"/>
    <property type="match status" value="1"/>
</dbReference>
<dbReference type="Gene3D" id="3.40.50.620">
    <property type="entry name" value="HUPs"/>
    <property type="match status" value="1"/>
</dbReference>
<dbReference type="Gene3D" id="3.30.1300.10">
    <property type="entry name" value="Pantoate-beta-alanine ligase, C-terminal domain"/>
    <property type="match status" value="1"/>
</dbReference>
<dbReference type="HAMAP" id="MF_00158">
    <property type="entry name" value="PanC"/>
    <property type="match status" value="1"/>
</dbReference>
<dbReference type="InterPro" id="IPR003721">
    <property type="entry name" value="Pantoate_ligase"/>
</dbReference>
<dbReference type="InterPro" id="IPR042176">
    <property type="entry name" value="Pantoate_ligase_C"/>
</dbReference>
<dbReference type="InterPro" id="IPR014729">
    <property type="entry name" value="Rossmann-like_a/b/a_fold"/>
</dbReference>
<dbReference type="NCBIfam" id="TIGR00018">
    <property type="entry name" value="panC"/>
    <property type="match status" value="1"/>
</dbReference>
<dbReference type="PANTHER" id="PTHR21299">
    <property type="entry name" value="CYTIDYLATE KINASE/PANTOATE-BETA-ALANINE LIGASE"/>
    <property type="match status" value="1"/>
</dbReference>
<dbReference type="PANTHER" id="PTHR21299:SF1">
    <property type="entry name" value="PANTOATE--BETA-ALANINE LIGASE"/>
    <property type="match status" value="1"/>
</dbReference>
<dbReference type="Pfam" id="PF02569">
    <property type="entry name" value="Pantoate_ligase"/>
    <property type="match status" value="1"/>
</dbReference>
<dbReference type="SUPFAM" id="SSF52374">
    <property type="entry name" value="Nucleotidylyl transferase"/>
    <property type="match status" value="1"/>
</dbReference>
<proteinExistence type="inferred from homology"/>
<organism>
    <name type="scientific">Mycolicibacterium vanbaalenii (strain DSM 7251 / JCM 13017 / BCRC 16820 / KCTC 9966 / NRRL B-24157 / PYR-1)</name>
    <name type="common">Mycobacterium vanbaalenii</name>
    <dbReference type="NCBI Taxonomy" id="350058"/>
    <lineage>
        <taxon>Bacteria</taxon>
        <taxon>Bacillati</taxon>
        <taxon>Actinomycetota</taxon>
        <taxon>Actinomycetes</taxon>
        <taxon>Mycobacteriales</taxon>
        <taxon>Mycobacteriaceae</taxon>
        <taxon>Mycolicibacterium</taxon>
    </lineage>
</organism>
<keyword id="KW-0067">ATP-binding</keyword>
<keyword id="KW-0963">Cytoplasm</keyword>
<keyword id="KW-0436">Ligase</keyword>
<keyword id="KW-0547">Nucleotide-binding</keyword>
<keyword id="KW-0566">Pantothenate biosynthesis</keyword>
<feature type="chain" id="PRO_0000305493" description="Pantothenate synthetase">
    <location>
        <begin position="1"/>
        <end position="311"/>
    </location>
</feature>
<feature type="active site" description="Proton donor" evidence="1">
    <location>
        <position position="50"/>
    </location>
</feature>
<feature type="binding site" evidence="1">
    <location>
        <begin position="43"/>
        <end position="50"/>
    </location>
    <ligand>
        <name>ATP</name>
        <dbReference type="ChEBI" id="CHEBI:30616"/>
    </ligand>
</feature>
<feature type="binding site" evidence="1">
    <location>
        <position position="75"/>
    </location>
    <ligand>
        <name>(R)-pantoate</name>
        <dbReference type="ChEBI" id="CHEBI:15980"/>
    </ligand>
</feature>
<feature type="binding site" evidence="1">
    <location>
        <position position="75"/>
    </location>
    <ligand>
        <name>beta-alanine</name>
        <dbReference type="ChEBI" id="CHEBI:57966"/>
    </ligand>
</feature>
<feature type="binding site" evidence="1">
    <location>
        <begin position="161"/>
        <end position="164"/>
    </location>
    <ligand>
        <name>ATP</name>
        <dbReference type="ChEBI" id="CHEBI:30616"/>
    </ligand>
</feature>
<feature type="binding site" evidence="1">
    <location>
        <position position="167"/>
    </location>
    <ligand>
        <name>(R)-pantoate</name>
        <dbReference type="ChEBI" id="CHEBI:15980"/>
    </ligand>
</feature>
<feature type="binding site" evidence="1">
    <location>
        <position position="190"/>
    </location>
    <ligand>
        <name>ATP</name>
        <dbReference type="ChEBI" id="CHEBI:30616"/>
    </ligand>
</feature>
<feature type="binding site" evidence="1">
    <location>
        <begin position="198"/>
        <end position="201"/>
    </location>
    <ligand>
        <name>ATP</name>
        <dbReference type="ChEBI" id="CHEBI:30616"/>
    </ligand>
</feature>
<protein>
    <recommendedName>
        <fullName evidence="1">Pantothenate synthetase</fullName>
        <shortName evidence="1">PS</shortName>
        <ecNumber evidence="1">6.3.2.1</ecNumber>
    </recommendedName>
    <alternativeName>
        <fullName evidence="1">Pantoate--beta-alanine ligase</fullName>
    </alternativeName>
    <alternativeName>
        <fullName evidence="1">Pantoate-activating enzyme</fullName>
    </alternativeName>
</protein>
<sequence length="311" mass="33414">MTRRDTPKFTAGQLNVYTRPGDVAAVTRALRATGRRIVLVPTMGALHEGHLTLIRAAKRVTGAVVVVSIFVNPLQFAANEDLGAYPRTLDADLDALRAEGVDIAFTPTADDMYPNGMRTTVHPGPLGAELEGALRPTHFAGVLTVVLKLFNTVRPDRAYFGEKDFQQLALIRQMVTDLDLEVEIQGVPIVREPDGLAMSSRNRYLDAVQREQAGALSAALLAGMYAAGEGTAAAVDAARAVLDEVPAIEVDYLEVRDAMLGPAPEVGMGRMLVAGRLGATRLLDNIAIDIGVPSGPGRQAEFDEHELPWRN</sequence>
<reference key="1">
    <citation type="submission" date="2006-12" db="EMBL/GenBank/DDBJ databases">
        <title>Complete sequence of Mycobacterium vanbaalenii PYR-1.</title>
        <authorList>
            <consortium name="US DOE Joint Genome Institute"/>
            <person name="Copeland A."/>
            <person name="Lucas S."/>
            <person name="Lapidus A."/>
            <person name="Barry K."/>
            <person name="Detter J.C."/>
            <person name="Glavina del Rio T."/>
            <person name="Hammon N."/>
            <person name="Israni S."/>
            <person name="Dalin E."/>
            <person name="Tice H."/>
            <person name="Pitluck S."/>
            <person name="Singan V."/>
            <person name="Schmutz J."/>
            <person name="Larimer F."/>
            <person name="Land M."/>
            <person name="Hauser L."/>
            <person name="Kyrpides N."/>
            <person name="Anderson I.J."/>
            <person name="Miller C."/>
            <person name="Richardson P."/>
        </authorList>
    </citation>
    <scope>NUCLEOTIDE SEQUENCE [LARGE SCALE GENOMIC DNA]</scope>
    <source>
        <strain>DSM 7251 / JCM 13017 / BCRC 16820 / KCTC 9966 / NRRL B-24157 / PYR-1</strain>
    </source>
</reference>
<evidence type="ECO:0000255" key="1">
    <source>
        <dbReference type="HAMAP-Rule" id="MF_00158"/>
    </source>
</evidence>
<comment type="function">
    <text evidence="1">Catalyzes the condensation of pantoate with beta-alanine in an ATP-dependent reaction via a pantoyl-adenylate intermediate.</text>
</comment>
<comment type="catalytic activity">
    <reaction evidence="1">
        <text>(R)-pantoate + beta-alanine + ATP = (R)-pantothenate + AMP + diphosphate + H(+)</text>
        <dbReference type="Rhea" id="RHEA:10912"/>
        <dbReference type="ChEBI" id="CHEBI:15378"/>
        <dbReference type="ChEBI" id="CHEBI:15980"/>
        <dbReference type="ChEBI" id="CHEBI:29032"/>
        <dbReference type="ChEBI" id="CHEBI:30616"/>
        <dbReference type="ChEBI" id="CHEBI:33019"/>
        <dbReference type="ChEBI" id="CHEBI:57966"/>
        <dbReference type="ChEBI" id="CHEBI:456215"/>
        <dbReference type="EC" id="6.3.2.1"/>
    </reaction>
</comment>
<comment type="pathway">
    <text evidence="1">Cofactor biosynthesis; (R)-pantothenate biosynthesis; (R)-pantothenate from (R)-pantoate and beta-alanine: step 1/1.</text>
</comment>
<comment type="subunit">
    <text evidence="1">Homodimer.</text>
</comment>
<comment type="subcellular location">
    <subcellularLocation>
        <location evidence="1">Cytoplasm</location>
    </subcellularLocation>
</comment>
<comment type="miscellaneous">
    <text evidence="1">The reaction proceeds by a bi uni uni bi ping pong mechanism.</text>
</comment>
<comment type="similarity">
    <text evidence="1">Belongs to the pantothenate synthetase family.</text>
</comment>
<name>PANC_MYCVP</name>
<accession>A1TG35</accession>